<gene>
    <name type="primary">CYP72A63</name>
</gene>
<evidence type="ECO:0000250" key="1"/>
<evidence type="ECO:0000255" key="2"/>
<evidence type="ECO:0000269" key="3">
    <source>
    </source>
</evidence>
<evidence type="ECO:0000305" key="4"/>
<accession>H1A981</accession>
<name>C7263_MEDTR</name>
<proteinExistence type="evidence at protein level"/>
<keyword id="KW-0349">Heme</keyword>
<keyword id="KW-0408">Iron</keyword>
<keyword id="KW-0472">Membrane</keyword>
<keyword id="KW-0479">Metal-binding</keyword>
<keyword id="KW-0503">Monooxygenase</keyword>
<keyword id="KW-0560">Oxidoreductase</keyword>
<keyword id="KW-0812">Transmembrane</keyword>
<keyword id="KW-1133">Transmembrane helix</keyword>
<sequence>MEVFMFPTGTTVIISVLSVLLAVIPWYLLNKLWLKPKRFEKLLKAQGFQGEPYNLSVLKDKSKQNYMLKLQQEDKSKSIGLSKEAAPSIFTPVHQTVRKYGNNSFLWEGTTPRVIITDPDQIKDVFNKIDDFPKPKLRSIAKYLSVGILDHEGKKWAKHRKIANPAFHLEKLKVMLPAFSHSCNEMISKWKELLSSDGTCEIDVWPSLQNFTCDVISRTAFGSSYAEGTKLFQLLKKQGFLLMTGRHTNNPLWGLLATTTKTKMKEIDREIHDSLEGIIEKREKALKNGETTNDDLLGILLQSNHAEKQGQGNSKNIGMTTQDVIDECKLFYLAGQETTSSLLVWTMVLLGRYPEWQARAREEVLQVFGNQNPNNEGLSQLKIVTMILYEVLRLFPPLIYFNRALRKDLKLGNLLLPEGTQISLPILLIHQDHDLWGDDAKEFKPERFAEGIAKATKGQVSYFPFGWGPRICLGQNFALLEAKIAVSLLLQNFSFELSPNYVHVPTTVLTLQPKNGASIILHKL</sequence>
<reference key="1">
    <citation type="journal article" date="2011" name="Plant Cell">
        <title>Triterpene functional genomics in licorice for identification of CYP72A154 involved in the biosynthesis of glycyrrhizin.</title>
        <authorList>
            <person name="Seki H."/>
            <person name="Sawai S."/>
            <person name="Ohyama K."/>
            <person name="Mizutani M."/>
            <person name="Ohnishi T."/>
            <person name="Sudo H."/>
            <person name="Fukushima E.O."/>
            <person name="Akashi T."/>
            <person name="Aoki T."/>
            <person name="Saito K."/>
            <person name="Muranaka T."/>
        </authorList>
    </citation>
    <scope>NUCLEOTIDE SEQUENCE [MRNA]</scope>
    <scope>FUNCTION</scope>
    <scope>CATALYTIC ACTIVITY</scope>
    <scope>TISSUE SPECIFICITY</scope>
    <scope>INDUCTION BY SALT</scope>
</reference>
<comment type="function">
    <text evidence="3">Involved in the biosynthesis of triterpenoid saponins. Catalyzes three sequential oxidation steps at C-30 of 11-oxo-beta-amyrin. Also able to catalyze sequential C-30 hydroxylation of beta-amyrin to produce 30-hydroxy-beta-amyrin and 11-deoxoglycyrrhetinic acid.</text>
</comment>
<comment type="catalytic activity">
    <reaction evidence="3">
        <text>11-oxo-beta-amyrin + 3 reduced [NADPH--hemoprotein reductase] + 3 O2 = glycyrrhetinate + 3 oxidized [NADPH--hemoprotein reductase] + 4 H2O + 4 H(+)</text>
        <dbReference type="Rhea" id="RHEA:35499"/>
        <dbReference type="Rhea" id="RHEA-COMP:11964"/>
        <dbReference type="Rhea" id="RHEA-COMP:11965"/>
        <dbReference type="ChEBI" id="CHEBI:15377"/>
        <dbReference type="ChEBI" id="CHEBI:15378"/>
        <dbReference type="ChEBI" id="CHEBI:15379"/>
        <dbReference type="ChEBI" id="CHEBI:17573"/>
        <dbReference type="ChEBI" id="CHEBI:57618"/>
        <dbReference type="ChEBI" id="CHEBI:58210"/>
        <dbReference type="ChEBI" id="CHEBI:63184"/>
        <dbReference type="EC" id="1.14.14.115"/>
    </reaction>
</comment>
<comment type="cofactor">
    <cofactor evidence="1">
        <name>heme</name>
        <dbReference type="ChEBI" id="CHEBI:30413"/>
    </cofactor>
</comment>
<comment type="subcellular location">
    <subcellularLocation>
        <location evidence="4">Membrane</location>
        <topology evidence="4">Single-pass membrane protein</topology>
    </subcellularLocation>
</comment>
<comment type="tissue specificity">
    <text evidence="3">Expressed in flowers. Detected in roots upon salt treatment.</text>
</comment>
<comment type="induction">
    <text evidence="3">Up-regulated in roots by salt treatment.</text>
</comment>
<comment type="similarity">
    <text evidence="4">Belongs to the cytochrome P450 family.</text>
</comment>
<protein>
    <recommendedName>
        <fullName>11-oxo-beta-amyrin 30-oxidase</fullName>
        <ecNumber evidence="3">1.14.14.115</ecNumber>
    </recommendedName>
    <alternativeName>
        <fullName>Cytochrome P450 72A63</fullName>
    </alternativeName>
</protein>
<dbReference type="EC" id="1.14.14.115" evidence="3"/>
<dbReference type="EMBL" id="AB558146">
    <property type="protein sequence ID" value="BAL45200.1"/>
    <property type="molecule type" value="mRNA"/>
</dbReference>
<dbReference type="SMR" id="H1A981"/>
<dbReference type="PaxDb" id="3880-AET02541"/>
<dbReference type="eggNOG" id="KOG0157">
    <property type="taxonomic scope" value="Eukaryota"/>
</dbReference>
<dbReference type="BioCyc" id="MetaCyc:MONOMER-20540"/>
<dbReference type="GO" id="GO:0016020">
    <property type="term" value="C:membrane"/>
    <property type="evidence" value="ECO:0007669"/>
    <property type="project" value="UniProtKB-SubCell"/>
</dbReference>
<dbReference type="GO" id="GO:0102375">
    <property type="term" value="F:11-oxo-beta-amyrin 30-oxidase activity"/>
    <property type="evidence" value="ECO:0007669"/>
    <property type="project" value="UniProtKB-EC"/>
</dbReference>
<dbReference type="GO" id="GO:0020037">
    <property type="term" value="F:heme binding"/>
    <property type="evidence" value="ECO:0007669"/>
    <property type="project" value="InterPro"/>
</dbReference>
<dbReference type="GO" id="GO:0005506">
    <property type="term" value="F:iron ion binding"/>
    <property type="evidence" value="ECO:0007669"/>
    <property type="project" value="InterPro"/>
</dbReference>
<dbReference type="GO" id="GO:0016709">
    <property type="term" value="F:oxidoreductase activity, acting on paired donors, with incorporation or reduction of molecular oxygen, NAD(P)H as one donor, and incorporation of one atom of oxygen"/>
    <property type="evidence" value="ECO:0000314"/>
    <property type="project" value="UniProtKB"/>
</dbReference>
<dbReference type="GO" id="GO:1902382">
    <property type="term" value="P:11-oxo-beta-amyrin catabolic process"/>
    <property type="evidence" value="ECO:0000314"/>
    <property type="project" value="UniProtKB"/>
</dbReference>
<dbReference type="GO" id="GO:1902386">
    <property type="term" value="P:glycyrrhetinate biosynthetic process"/>
    <property type="evidence" value="ECO:0000314"/>
    <property type="project" value="UniProtKB"/>
</dbReference>
<dbReference type="CDD" id="cd20642">
    <property type="entry name" value="CYP72"/>
    <property type="match status" value="1"/>
</dbReference>
<dbReference type="FunFam" id="1.10.630.10:FF:000029">
    <property type="entry name" value="Cytochrome P450 734A1"/>
    <property type="match status" value="1"/>
</dbReference>
<dbReference type="Gene3D" id="1.10.630.10">
    <property type="entry name" value="Cytochrome P450"/>
    <property type="match status" value="1"/>
</dbReference>
<dbReference type="InterPro" id="IPR001128">
    <property type="entry name" value="Cyt_P450"/>
</dbReference>
<dbReference type="InterPro" id="IPR017972">
    <property type="entry name" value="Cyt_P450_CS"/>
</dbReference>
<dbReference type="InterPro" id="IPR002401">
    <property type="entry name" value="Cyt_P450_E_grp-I"/>
</dbReference>
<dbReference type="InterPro" id="IPR036396">
    <property type="entry name" value="Cyt_P450_sf"/>
</dbReference>
<dbReference type="InterPro" id="IPR050665">
    <property type="entry name" value="Cytochrome_P450_Monooxygen"/>
</dbReference>
<dbReference type="PANTHER" id="PTHR24282:SF253">
    <property type="entry name" value="11-OXO-BETA-AMYRIN 30-OXIDASE"/>
    <property type="match status" value="1"/>
</dbReference>
<dbReference type="PANTHER" id="PTHR24282">
    <property type="entry name" value="CYTOCHROME P450 FAMILY MEMBER"/>
    <property type="match status" value="1"/>
</dbReference>
<dbReference type="Pfam" id="PF00067">
    <property type="entry name" value="p450"/>
    <property type="match status" value="1"/>
</dbReference>
<dbReference type="PRINTS" id="PR00463">
    <property type="entry name" value="EP450I"/>
</dbReference>
<dbReference type="PRINTS" id="PR00385">
    <property type="entry name" value="P450"/>
</dbReference>
<dbReference type="SUPFAM" id="SSF48264">
    <property type="entry name" value="Cytochrome P450"/>
    <property type="match status" value="1"/>
</dbReference>
<dbReference type="PROSITE" id="PS00086">
    <property type="entry name" value="CYTOCHROME_P450"/>
    <property type="match status" value="1"/>
</dbReference>
<feature type="chain" id="PRO_0000424184" description="11-oxo-beta-amyrin 30-oxidase">
    <location>
        <begin position="1"/>
        <end position="524"/>
    </location>
</feature>
<feature type="transmembrane region" description="Helical" evidence="2">
    <location>
        <begin position="9"/>
        <end position="29"/>
    </location>
</feature>
<feature type="binding site" description="axial binding residue" evidence="1">
    <location>
        <position position="472"/>
    </location>
    <ligand>
        <name>heme</name>
        <dbReference type="ChEBI" id="CHEBI:30413"/>
    </ligand>
    <ligandPart>
        <name>Fe</name>
        <dbReference type="ChEBI" id="CHEBI:18248"/>
    </ligandPart>
</feature>
<organism>
    <name type="scientific">Medicago truncatula</name>
    <name type="common">Barrel medic</name>
    <name type="synonym">Medicago tribuloides</name>
    <dbReference type="NCBI Taxonomy" id="3880"/>
    <lineage>
        <taxon>Eukaryota</taxon>
        <taxon>Viridiplantae</taxon>
        <taxon>Streptophyta</taxon>
        <taxon>Embryophyta</taxon>
        <taxon>Tracheophyta</taxon>
        <taxon>Spermatophyta</taxon>
        <taxon>Magnoliopsida</taxon>
        <taxon>eudicotyledons</taxon>
        <taxon>Gunneridae</taxon>
        <taxon>Pentapetalae</taxon>
        <taxon>rosids</taxon>
        <taxon>fabids</taxon>
        <taxon>Fabales</taxon>
        <taxon>Fabaceae</taxon>
        <taxon>Papilionoideae</taxon>
        <taxon>50 kb inversion clade</taxon>
        <taxon>NPAAA clade</taxon>
        <taxon>Hologalegina</taxon>
        <taxon>IRL clade</taxon>
        <taxon>Trifolieae</taxon>
        <taxon>Medicago</taxon>
    </lineage>
</organism>